<dbReference type="EC" id="2.7.1.73" evidence="1 2"/>
<dbReference type="EMBL" id="AB005149">
    <property type="protein sequence ID" value="BAA23613.1"/>
    <property type="molecule type" value="Genomic_DNA"/>
</dbReference>
<dbReference type="RefSeq" id="WP_029340887.1">
    <property type="nucleotide sequence ID" value="NZ_LFQN01000014.1"/>
</dbReference>
<dbReference type="SMR" id="O24767"/>
<dbReference type="PATRIC" id="fig|41170.3.peg.318"/>
<dbReference type="UniPathway" id="UPA00591">
    <property type="reaction ID" value="UER00647"/>
</dbReference>
<dbReference type="UniPathway" id="UPA00909"/>
<dbReference type="GO" id="GO:0005524">
    <property type="term" value="F:ATP binding"/>
    <property type="evidence" value="ECO:0007669"/>
    <property type="project" value="UniProtKB-KW"/>
</dbReference>
<dbReference type="GO" id="GO:0016301">
    <property type="term" value="F:kinase activity"/>
    <property type="evidence" value="ECO:0007669"/>
    <property type="project" value="UniProtKB-KW"/>
</dbReference>
<dbReference type="GO" id="GO:0032263">
    <property type="term" value="P:GMP salvage"/>
    <property type="evidence" value="ECO:0007669"/>
    <property type="project" value="UniProtKB-UniPathway"/>
</dbReference>
<dbReference type="GO" id="GO:0032264">
    <property type="term" value="P:IMP salvage"/>
    <property type="evidence" value="ECO:0007669"/>
    <property type="project" value="UniProtKB-UniPathway"/>
</dbReference>
<dbReference type="GO" id="GO:0006166">
    <property type="term" value="P:purine ribonucleoside salvage"/>
    <property type="evidence" value="ECO:0007669"/>
    <property type="project" value="UniProtKB-KW"/>
</dbReference>
<dbReference type="Gene3D" id="3.40.1190.20">
    <property type="match status" value="1"/>
</dbReference>
<dbReference type="InterPro" id="IPR002173">
    <property type="entry name" value="Carboh/pur_kinase_PfkB_CS"/>
</dbReference>
<dbReference type="InterPro" id="IPR011611">
    <property type="entry name" value="PfkB_dom"/>
</dbReference>
<dbReference type="InterPro" id="IPR029056">
    <property type="entry name" value="Ribokinase-like"/>
</dbReference>
<dbReference type="PANTHER" id="PTHR10584:SF166">
    <property type="entry name" value="RIBOKINASE"/>
    <property type="match status" value="1"/>
</dbReference>
<dbReference type="PANTHER" id="PTHR10584">
    <property type="entry name" value="SUGAR KINASE"/>
    <property type="match status" value="1"/>
</dbReference>
<dbReference type="Pfam" id="PF00294">
    <property type="entry name" value="PfkB"/>
    <property type="match status" value="1"/>
</dbReference>
<dbReference type="SUPFAM" id="SSF53613">
    <property type="entry name" value="Ribokinase-like"/>
    <property type="match status" value="1"/>
</dbReference>
<dbReference type="PROSITE" id="PS00584">
    <property type="entry name" value="PFKB_KINASES_2"/>
    <property type="match status" value="1"/>
</dbReference>
<reference key="1">
    <citation type="journal article" date="1997" name="J. Bacteriol.">
        <title>Molecular cloning and transcriptional analysis of a guanosine kinase gene of Brevibacterium acetylicum ATCC 953.</title>
        <authorList>
            <person name="Usuda Y."/>
            <person name="Kawasaki H."/>
            <person name="Shimaoka M."/>
            <person name="Utagawa T."/>
        </authorList>
    </citation>
    <scope>NUCLEOTIDE SEQUENCE [GENOMIC DNA]</scope>
    <scope>PROTEIN SEQUENCE OF 1-28</scope>
    <scope>INDUCTION</scope>
    <source>
        <strain>ATCC 953 / DSM 20416 / JCM 1968 / KCTC 3255 / NCIMB 9889 / 1005</strain>
    </source>
</reference>
<reference key="2">
    <citation type="journal article" date="1997" name="Biochim. Biophys. Acta">
        <title>Characterization of guanosine kinase from Brevibacterium acetylicum ATCC 953.</title>
        <authorList>
            <person name="Usuda Y."/>
            <person name="Kawasaki H."/>
            <person name="Shimaoka M."/>
            <person name="Utagawa T."/>
        </authorList>
    </citation>
    <scope>FUNCTION</scope>
    <scope>CATALYTIC ACTIVITY</scope>
    <scope>COFACTOR</scope>
    <scope>ACTIVITY REGULATION</scope>
    <scope>BIOPHYSICOCHEMICAL PROPERTIES</scope>
    <scope>PATHWAY</scope>
    <scope>SUBUNIT</scope>
    <source>
        <strain>ATCC 953 / DSM 20416 / JCM 1968 / KCTC 3255 / NCIMB 9889 / 1005</strain>
    </source>
</reference>
<reference key="3">
    <citation type="journal article" date="2000" name="Biosci. Biotechnol. Biochem.">
        <title>Phosphorylation of guanosine using guanosine-inosine kinase from Exiguobacterium acetylicum coupled with ATP regeneration.</title>
        <authorList>
            <person name="Kawasaki H."/>
            <person name="Usuda Y."/>
            <person name="Shimaoka M."/>
            <person name="Utagawa T."/>
        </authorList>
    </citation>
    <scope>FUNCTION</scope>
    <scope>CATALYTIC ACTIVITY</scope>
</reference>
<protein>
    <recommendedName>
        <fullName evidence="4">Guanosine-inosine kinase</fullName>
        <ecNumber evidence="1 2">2.7.1.73</ecNumber>
    </recommendedName>
    <alternativeName>
        <fullName evidence="5">ATP:guanosine 5'-phosphotransferase</fullName>
    </alternativeName>
    <alternativeName>
        <fullName evidence="5">Guanosine kinase</fullName>
        <shortName evidence="5">GKase</shortName>
    </alternativeName>
</protein>
<gene>
    <name evidence="6" type="primary">gsk</name>
</gene>
<feature type="chain" id="PRO_0000452717" description="Guanosine-inosine kinase">
    <location>
        <begin position="1"/>
        <end position="303"/>
    </location>
</feature>
<accession>O24767</accession>
<evidence type="ECO:0000269" key="1">
    <source>
    </source>
</evidence>
<evidence type="ECO:0000269" key="2">
    <source>
    </source>
</evidence>
<evidence type="ECO:0000269" key="3">
    <source>
    </source>
</evidence>
<evidence type="ECO:0000303" key="4">
    <source>
    </source>
</evidence>
<evidence type="ECO:0000303" key="5">
    <source>
    </source>
</evidence>
<evidence type="ECO:0000303" key="6">
    <source>
    </source>
</evidence>
<evidence type="ECO:0000305" key="7"/>
<evidence type="ECO:0000305" key="8">
    <source>
    </source>
</evidence>
<proteinExistence type="evidence at protein level"/>
<name>INGK_EXIAC</name>
<keyword id="KW-0067">ATP-binding</keyword>
<keyword id="KW-0903">Direct protein sequencing</keyword>
<keyword id="KW-0418">Kinase</keyword>
<keyword id="KW-0460">Magnesium</keyword>
<keyword id="KW-0547">Nucleotide-binding</keyword>
<keyword id="KW-0660">Purine salvage</keyword>
<keyword id="KW-0808">Transferase</keyword>
<comment type="function">
    <text evidence="1 2">Catalyzes the phosphorylation of guanosine and inosine to GMP and IMP, respectively (PubMed:11129609, PubMed:9357959). Can also use deoxyguanosine (PubMed:9357959). Shows a strong preference for guanosine (PubMed:9357959). dATP, GTP and dGTP can serve as phosphate donors (PubMed:9357959).</text>
</comment>
<comment type="catalytic activity">
    <reaction evidence="1 2">
        <text>guanosine + ATP = GMP + ADP + H(+)</text>
        <dbReference type="Rhea" id="RHEA:27710"/>
        <dbReference type="ChEBI" id="CHEBI:15378"/>
        <dbReference type="ChEBI" id="CHEBI:16750"/>
        <dbReference type="ChEBI" id="CHEBI:30616"/>
        <dbReference type="ChEBI" id="CHEBI:58115"/>
        <dbReference type="ChEBI" id="CHEBI:456216"/>
        <dbReference type="EC" id="2.7.1.73"/>
    </reaction>
    <physiologicalReaction direction="left-to-right" evidence="2">
        <dbReference type="Rhea" id="RHEA:27711"/>
    </physiologicalReaction>
</comment>
<comment type="catalytic activity">
    <reaction evidence="1 2">
        <text>inosine + ATP = IMP + ADP + H(+)</text>
        <dbReference type="Rhea" id="RHEA:21140"/>
        <dbReference type="ChEBI" id="CHEBI:15378"/>
        <dbReference type="ChEBI" id="CHEBI:17596"/>
        <dbReference type="ChEBI" id="CHEBI:30616"/>
        <dbReference type="ChEBI" id="CHEBI:58053"/>
        <dbReference type="ChEBI" id="CHEBI:456216"/>
        <dbReference type="EC" id="2.7.1.73"/>
    </reaction>
    <physiologicalReaction direction="left-to-right" evidence="2">
        <dbReference type="Rhea" id="RHEA:21141"/>
    </physiologicalReaction>
</comment>
<comment type="cofactor">
    <cofactor evidence="2">
        <name>Mg(2+)</name>
        <dbReference type="ChEBI" id="CHEBI:18420"/>
    </cofactor>
    <text evidence="2">Manganese or cobalt, but not calcium, nickel or zinc can replace Mg(2+) but results in reduced reaction rates.</text>
</comment>
<comment type="activity regulation">
    <text evidence="2">Kinase activity is stimulated by pyrimidine nucleotides, especially CMP and CTP, and inhibited by AMP, ADP and GMP (PubMed:9357959). Activity is stimulated by potassium or ammonium ions (PubMed:9357959).</text>
</comment>
<comment type="biophysicochemical properties">
    <kinetics>
        <KM evidence="2">0.022 mM for guanosine</KM>
        <KM evidence="2">0.87 mM for inosine</KM>
        <KM evidence="2">2.83 mM for deoxyguanosine</KM>
        <Vmax evidence="2">217.0 umol/min/mg enzyme with guanosine as substrate</Vmax>
        <Vmax evidence="2">35.9 umol/min/mg enzyme with inosine as substrate</Vmax>
        <Vmax evidence="2">59.3 umol/min/mg enzyme with deoxyguanosine as substrate</Vmax>
    </kinetics>
    <phDependence>
        <text evidence="2">Optimum pH is around 8.3.</text>
    </phDependence>
</comment>
<comment type="pathway">
    <text evidence="8">Purine metabolism; IMP biosynthesis via salvage pathway; IMP from inosine: step 1/1.</text>
</comment>
<comment type="pathway">
    <text evidence="8">Purine metabolism; GMP biosynthesis via salvage pathway.</text>
</comment>
<comment type="subunit">
    <text evidence="2">Homodimer.</text>
</comment>
<comment type="induction">
    <text evidence="3">Specifically transcribed in the early exponential growth phase.</text>
</comment>
<comment type="similarity">
    <text evidence="7">Belongs to the carbohydrate kinase PfkB family.</text>
</comment>
<organism>
    <name type="scientific">Exiguobacterium acetylicum</name>
    <name type="common">Brevibacterium acetylicum</name>
    <dbReference type="NCBI Taxonomy" id="41170"/>
    <lineage>
        <taxon>Bacteria</taxon>
        <taxon>Bacillati</taxon>
        <taxon>Bacillota</taxon>
        <taxon>Bacilli</taxon>
        <taxon>Bacillales</taxon>
        <taxon>Bacillales Family XII. Incertae Sedis</taxon>
        <taxon>Exiguobacterium</taxon>
    </lineage>
</organism>
<sequence length="303" mass="32536">MNKIAVIGKVFVDIKGTSFAPLHKDAKNVGDITFSNGGTGRNVAQNLAVLGNEVRFISTVTNDQIGVGVLDELKSYGANVDHVEMLEDHGMGMWLAVMDNEGDLQTSISKQPDAKLLEEAILRQSIYALDGVDAVAIDLDLSVTVLERLIHLCRKMELPLFGVCGHLSVIERNRHLLQGFTGFICSREEAEILSDLSIVTVEDAIHVANELAKKGAPFTVVTMSELGAVYVDRRTATSGHVGTKKVKVVDSTGAGDSFFSAVLSELTQEKSAEEALKLGMKVAAEVIASTENGLVPEMLDALQ</sequence>